<keyword id="KW-1185">Reference proteome</keyword>
<protein>
    <recommendedName>
        <fullName evidence="1">Sugar fermentation stimulation protein homolog</fullName>
    </recommendedName>
</protein>
<dbReference type="EMBL" id="CP000453">
    <property type="protein sequence ID" value="ABI56790.1"/>
    <property type="molecule type" value="Genomic_DNA"/>
</dbReference>
<dbReference type="RefSeq" id="WP_011629185.1">
    <property type="nucleotide sequence ID" value="NC_008340.1"/>
</dbReference>
<dbReference type="SMR" id="Q0A8P7"/>
<dbReference type="KEGG" id="aeh:Mlg_1441"/>
<dbReference type="eggNOG" id="COG1489">
    <property type="taxonomic scope" value="Bacteria"/>
</dbReference>
<dbReference type="HOGENOM" id="CLU_052299_2_0_6"/>
<dbReference type="OrthoDB" id="9802365at2"/>
<dbReference type="Proteomes" id="UP000001962">
    <property type="component" value="Chromosome"/>
</dbReference>
<dbReference type="GO" id="GO:0003677">
    <property type="term" value="F:DNA binding"/>
    <property type="evidence" value="ECO:0007669"/>
    <property type="project" value="InterPro"/>
</dbReference>
<dbReference type="CDD" id="cd22359">
    <property type="entry name" value="SfsA-like_bacterial"/>
    <property type="match status" value="1"/>
</dbReference>
<dbReference type="FunFam" id="2.40.50.580:FF:000001">
    <property type="entry name" value="Sugar fermentation stimulation protein A"/>
    <property type="match status" value="1"/>
</dbReference>
<dbReference type="Gene3D" id="2.40.50.580">
    <property type="match status" value="1"/>
</dbReference>
<dbReference type="Gene3D" id="3.40.1350.60">
    <property type="match status" value="1"/>
</dbReference>
<dbReference type="HAMAP" id="MF_00095">
    <property type="entry name" value="SfsA"/>
    <property type="match status" value="1"/>
</dbReference>
<dbReference type="InterPro" id="IPR005224">
    <property type="entry name" value="SfsA"/>
</dbReference>
<dbReference type="InterPro" id="IPR040452">
    <property type="entry name" value="SfsA_C"/>
</dbReference>
<dbReference type="InterPro" id="IPR041465">
    <property type="entry name" value="SfsA_N"/>
</dbReference>
<dbReference type="NCBIfam" id="TIGR00230">
    <property type="entry name" value="sfsA"/>
    <property type="match status" value="1"/>
</dbReference>
<dbReference type="PANTHER" id="PTHR30545">
    <property type="entry name" value="SUGAR FERMENTATION STIMULATION PROTEIN A"/>
    <property type="match status" value="1"/>
</dbReference>
<dbReference type="PANTHER" id="PTHR30545:SF2">
    <property type="entry name" value="SUGAR FERMENTATION STIMULATION PROTEIN A"/>
    <property type="match status" value="1"/>
</dbReference>
<dbReference type="Pfam" id="PF03749">
    <property type="entry name" value="SfsA"/>
    <property type="match status" value="1"/>
</dbReference>
<dbReference type="Pfam" id="PF17746">
    <property type="entry name" value="SfsA_N"/>
    <property type="match status" value="1"/>
</dbReference>
<evidence type="ECO:0000255" key="1">
    <source>
        <dbReference type="HAMAP-Rule" id="MF_00095"/>
    </source>
</evidence>
<gene>
    <name evidence="1" type="primary">sfsA</name>
    <name type="ordered locus">Mlg_1441</name>
</gene>
<feature type="chain" id="PRO_1000007967" description="Sugar fermentation stimulation protein homolog">
    <location>
        <begin position="1"/>
        <end position="238"/>
    </location>
</feature>
<proteinExistence type="inferred from homology"/>
<reference key="1">
    <citation type="submission" date="2006-08" db="EMBL/GenBank/DDBJ databases">
        <title>Complete sequence of Alkalilimnicola ehrilichei MLHE-1.</title>
        <authorList>
            <person name="Copeland A."/>
            <person name="Lucas S."/>
            <person name="Lapidus A."/>
            <person name="Barry K."/>
            <person name="Detter J.C."/>
            <person name="Glavina del Rio T."/>
            <person name="Hammon N."/>
            <person name="Israni S."/>
            <person name="Dalin E."/>
            <person name="Tice H."/>
            <person name="Pitluck S."/>
            <person name="Sims D."/>
            <person name="Brettin T."/>
            <person name="Bruce D."/>
            <person name="Han C."/>
            <person name="Tapia R."/>
            <person name="Gilna P."/>
            <person name="Schmutz J."/>
            <person name="Larimer F."/>
            <person name="Land M."/>
            <person name="Hauser L."/>
            <person name="Kyrpides N."/>
            <person name="Mikhailova N."/>
            <person name="Oremland R.S."/>
            <person name="Hoeft S.E."/>
            <person name="Switzer-Blum J."/>
            <person name="Kulp T."/>
            <person name="King G."/>
            <person name="Tabita R."/>
            <person name="Witte B."/>
            <person name="Santini J.M."/>
            <person name="Basu P."/>
            <person name="Hollibaugh J.T."/>
            <person name="Xie G."/>
            <person name="Stolz J.F."/>
            <person name="Richardson P."/>
        </authorList>
    </citation>
    <scope>NUCLEOTIDE SEQUENCE [LARGE SCALE GENOMIC DNA]</scope>
    <source>
        <strain>ATCC BAA-1101 / DSM 17681 / MLHE-1</strain>
    </source>
</reference>
<accession>Q0A8P7</accession>
<name>SFSA_ALKEH</name>
<sequence length="238" mass="25913">MIFDTPLQGGQLIRRYKRFLADITLDSGERITAHCPNTGSMMGCAEPGSRVWVSRSDNPRRKYAYTWELVEVAAGVVVGVHTGRANALVEEALLAGRLPALRGYRRVRREVRVVNRPMRADLLLGDHSEGEPDCLLEVKNVTAAVADGVALFPDAVSARGTRHLDVLAAEARAGRRTALVFCVQRPDVREVHPADAIDRAYGQALRAALADGMEAYALQGGPSPEGIELTRELPVHCP</sequence>
<organism>
    <name type="scientific">Alkalilimnicola ehrlichii (strain ATCC BAA-1101 / DSM 17681 / MLHE-1)</name>
    <dbReference type="NCBI Taxonomy" id="187272"/>
    <lineage>
        <taxon>Bacteria</taxon>
        <taxon>Pseudomonadati</taxon>
        <taxon>Pseudomonadota</taxon>
        <taxon>Gammaproteobacteria</taxon>
        <taxon>Chromatiales</taxon>
        <taxon>Ectothiorhodospiraceae</taxon>
        <taxon>Alkalilimnicola</taxon>
    </lineage>
</organism>
<comment type="similarity">
    <text evidence="1">Belongs to the SfsA family.</text>
</comment>